<protein>
    <recommendedName>
        <fullName>Ornithine carbamoyltransferase</fullName>
        <shortName>OTCase</shortName>
        <ecNumber>2.1.3.3</ecNumber>
    </recommendedName>
</protein>
<gene>
    <name type="primary">argF</name>
</gene>
<organism>
    <name type="scientific">Neisseria mucosa</name>
    <dbReference type="NCBI Taxonomy" id="488"/>
    <lineage>
        <taxon>Bacteria</taxon>
        <taxon>Pseudomonadati</taxon>
        <taxon>Pseudomonadota</taxon>
        <taxon>Betaproteobacteria</taxon>
        <taxon>Neisseriales</taxon>
        <taxon>Neisseriaceae</taxon>
        <taxon>Neisseria</taxon>
    </lineage>
</organism>
<proteinExistence type="inferred from homology"/>
<feature type="chain" id="PRO_0000112967" description="Ornithine carbamoyltransferase">
    <location>
        <begin position="1" status="less than"/>
        <end position="262" status="greater than"/>
    </location>
</feature>
<feature type="binding site" evidence="1">
    <location>
        <begin position="3"/>
        <end position="7"/>
    </location>
    <ligand>
        <name>carbamoyl phosphate</name>
        <dbReference type="ChEBI" id="CHEBI:58228"/>
    </ligand>
</feature>
<feature type="binding site" evidence="1">
    <location>
        <position position="30"/>
    </location>
    <ligand>
        <name>carbamoyl phosphate</name>
        <dbReference type="ChEBI" id="CHEBI:58228"/>
    </ligand>
</feature>
<feature type="binding site" evidence="1">
    <location>
        <position position="54"/>
    </location>
    <ligand>
        <name>carbamoyl phosphate</name>
        <dbReference type="ChEBI" id="CHEBI:58228"/>
    </ligand>
</feature>
<feature type="binding site" evidence="1">
    <location>
        <begin position="81"/>
        <end position="84"/>
    </location>
    <ligand>
        <name>carbamoyl phosphate</name>
        <dbReference type="ChEBI" id="CHEBI:58228"/>
    </ligand>
</feature>
<feature type="binding site" evidence="1">
    <location>
        <position position="114"/>
    </location>
    <ligand>
        <name>L-ornithine</name>
        <dbReference type="ChEBI" id="CHEBI:46911"/>
    </ligand>
</feature>
<feature type="binding site" evidence="1">
    <location>
        <position position="178"/>
    </location>
    <ligand>
        <name>L-ornithine</name>
        <dbReference type="ChEBI" id="CHEBI:46911"/>
    </ligand>
</feature>
<feature type="binding site" evidence="1">
    <location>
        <begin position="182"/>
        <end position="183"/>
    </location>
    <ligand>
        <name>L-ornithine</name>
        <dbReference type="ChEBI" id="CHEBI:46911"/>
    </ligand>
</feature>
<feature type="binding site" evidence="1">
    <location>
        <begin position="219"/>
        <end position="222"/>
    </location>
    <ligand>
        <name>carbamoyl phosphate</name>
        <dbReference type="ChEBI" id="CHEBI:58228"/>
    </ligand>
</feature>
<feature type="binding site" evidence="1">
    <location>
        <position position="247"/>
    </location>
    <ligand>
        <name>carbamoyl phosphate</name>
        <dbReference type="ChEBI" id="CHEBI:58228"/>
    </ligand>
</feature>
<feature type="site" description="Important for structural integrity" evidence="1">
    <location>
        <position position="94"/>
    </location>
</feature>
<feature type="sequence variant" description="In strain: Vedros M1801.">
    <original>R</original>
    <variation>G</variation>
    <location>
        <position position="32"/>
    </location>
</feature>
<feature type="sequence variant" description="In strain: Vedros M1801.">
    <original>Y</original>
    <variation>F</variation>
    <location>
        <position position="48"/>
    </location>
</feature>
<feature type="sequence variant" description="In strain: Vedros M1801.">
    <original>G</original>
    <variation>D</variation>
    <location>
        <position position="97"/>
    </location>
</feature>
<feature type="sequence variant" description="In strain: Vedros M1801.">
    <original>T</original>
    <variation>V</variation>
    <location>
        <position position="103"/>
    </location>
</feature>
<feature type="sequence variant" description="In strain: Vedros M1801.">
    <original>G</original>
    <variation>A</variation>
    <location>
        <position position="123"/>
    </location>
</feature>
<feature type="sequence variant" description="In strain: Vedros M1801.">
    <original>T</original>
    <variation>S</variation>
    <location>
        <position position="137"/>
    </location>
</feature>
<feature type="sequence variant" description="In strain: Vedros M1801.">
    <original>VARAR</original>
    <variation>IETVQ</variation>
    <location>
        <begin position="145"/>
        <end position="149"/>
    </location>
</feature>
<feature type="sequence variant" description="In strain: Vedros M1801.">
    <original>E</original>
    <variation>K</variation>
    <location>
        <position position="153"/>
    </location>
</feature>
<feature type="sequence variant" description="In strain: Vedros M1801.">
    <original>K</original>
    <variation>R</variation>
    <location>
        <position position="158"/>
    </location>
</feature>
<feature type="sequence variant" description="In strain: Vedros M1801.">
    <original>E</original>
    <variation>Q</variation>
    <location>
        <position position="166"/>
    </location>
</feature>
<feature type="sequence variant" description="In strain: Vedros M1801.">
    <original>VSG</original>
    <variation>AAE</variation>
    <location>
        <begin position="209"/>
        <end position="211"/>
    </location>
</feature>
<feature type="non-terminal residue">
    <location>
        <position position="1"/>
    </location>
</feature>
<feature type="non-terminal residue">
    <location>
        <position position="262"/>
    </location>
</feature>
<accession>Q01326</accession>
<accession>O86399</accession>
<keyword id="KW-0028">Amino-acid biosynthesis</keyword>
<keyword id="KW-0055">Arginine biosynthesis</keyword>
<keyword id="KW-0963">Cytoplasm</keyword>
<keyword id="KW-0808">Transferase</keyword>
<dbReference type="EC" id="2.1.3.3"/>
<dbReference type="EMBL" id="X64873">
    <property type="protein sequence ID" value="CAA46085.1"/>
    <property type="molecule type" value="Genomic_DNA"/>
</dbReference>
<dbReference type="EMBL" id="AJ223896">
    <property type="protein sequence ID" value="CAA11627.1"/>
    <property type="molecule type" value="Genomic_DNA"/>
</dbReference>
<dbReference type="PIR" id="S24727">
    <property type="entry name" value="S24727"/>
</dbReference>
<dbReference type="SMR" id="Q01326"/>
<dbReference type="UniPathway" id="UPA00068">
    <property type="reaction ID" value="UER00112"/>
</dbReference>
<dbReference type="GO" id="GO:0005737">
    <property type="term" value="C:cytoplasm"/>
    <property type="evidence" value="ECO:0007669"/>
    <property type="project" value="UniProtKB-SubCell"/>
</dbReference>
<dbReference type="GO" id="GO:0016597">
    <property type="term" value="F:amino acid binding"/>
    <property type="evidence" value="ECO:0007669"/>
    <property type="project" value="InterPro"/>
</dbReference>
<dbReference type="GO" id="GO:0004585">
    <property type="term" value="F:ornithine carbamoyltransferase activity"/>
    <property type="evidence" value="ECO:0007669"/>
    <property type="project" value="UniProtKB-EC"/>
</dbReference>
<dbReference type="GO" id="GO:0042450">
    <property type="term" value="P:arginine biosynthetic process via ornithine"/>
    <property type="evidence" value="ECO:0007669"/>
    <property type="project" value="TreeGrafter"/>
</dbReference>
<dbReference type="GO" id="GO:0019240">
    <property type="term" value="P:citrulline biosynthetic process"/>
    <property type="evidence" value="ECO:0007669"/>
    <property type="project" value="TreeGrafter"/>
</dbReference>
<dbReference type="GO" id="GO:0006526">
    <property type="term" value="P:L-arginine biosynthetic process"/>
    <property type="evidence" value="ECO:0007669"/>
    <property type="project" value="UniProtKB-UniPathway"/>
</dbReference>
<dbReference type="FunFam" id="3.40.50.1370:FF:000004">
    <property type="entry name" value="Ornithine carbamoyltransferase"/>
    <property type="match status" value="1"/>
</dbReference>
<dbReference type="Gene3D" id="3.40.50.1370">
    <property type="entry name" value="Aspartate/ornithine carbamoyltransferase"/>
    <property type="match status" value="2"/>
</dbReference>
<dbReference type="InterPro" id="IPR006132">
    <property type="entry name" value="Asp/Orn_carbamoyltranf_P-bd"/>
</dbReference>
<dbReference type="InterPro" id="IPR006130">
    <property type="entry name" value="Asp/Orn_carbamoylTrfase"/>
</dbReference>
<dbReference type="InterPro" id="IPR036901">
    <property type="entry name" value="Asp/Orn_carbamoylTrfase_sf"/>
</dbReference>
<dbReference type="InterPro" id="IPR006131">
    <property type="entry name" value="Asp_carbamoyltransf_Asp/Orn-bd"/>
</dbReference>
<dbReference type="InterPro" id="IPR002292">
    <property type="entry name" value="Orn/put_carbamltrans"/>
</dbReference>
<dbReference type="NCBIfam" id="TIGR00658">
    <property type="entry name" value="orni_carb_tr"/>
    <property type="match status" value="1"/>
</dbReference>
<dbReference type="PANTHER" id="PTHR45753:SF2">
    <property type="entry name" value="ORNITHINE CARBAMOYLTRANSFERASE"/>
    <property type="match status" value="1"/>
</dbReference>
<dbReference type="PANTHER" id="PTHR45753">
    <property type="entry name" value="ORNITHINE CARBAMOYLTRANSFERASE, MITOCHONDRIAL"/>
    <property type="match status" value="1"/>
</dbReference>
<dbReference type="Pfam" id="PF00185">
    <property type="entry name" value="OTCace"/>
    <property type="match status" value="1"/>
</dbReference>
<dbReference type="Pfam" id="PF02729">
    <property type="entry name" value="OTCace_N"/>
    <property type="match status" value="1"/>
</dbReference>
<dbReference type="PRINTS" id="PR00100">
    <property type="entry name" value="AOTCASE"/>
</dbReference>
<dbReference type="PRINTS" id="PR00102">
    <property type="entry name" value="OTCASE"/>
</dbReference>
<dbReference type="SUPFAM" id="SSF53671">
    <property type="entry name" value="Aspartate/ornithine carbamoyltransferase"/>
    <property type="match status" value="1"/>
</dbReference>
<reference key="1">
    <citation type="journal article" date="1992" name="Mol. Microbiol.">
        <title>Sequence diversity within the argF, fbp and recA genes of natural isolates of Neisseria meningitidis: interspecies recombination within the argF gene.</title>
        <authorList>
            <person name="Zhou J."/>
            <person name="Spratt B.G."/>
        </authorList>
    </citation>
    <scope>NUCLEOTIDE SEQUENCE [GENOMIC DNA]</scope>
    <source>
        <strain>LNP 405</strain>
    </source>
</reference>
<reference key="2">
    <citation type="journal article" date="1999" name="Mol. Biol. Evol.">
        <title>Networks and groups within the genus Neisseria: analysis of argF, recA, rho, and 16S rRNA sequences from human Neisseria species.</title>
        <authorList>
            <person name="Smith N.H."/>
            <person name="Holmes E.C."/>
            <person name="Donovan G.M."/>
            <person name="Carpenter G.A."/>
            <person name="Spratt B.G."/>
        </authorList>
    </citation>
    <scope>NUCLEOTIDE SEQUENCE [GENOMIC DNA] OF 16-247</scope>
    <source>
        <strain>Vedros M1801</strain>
    </source>
</reference>
<name>OTC_NEIMU</name>
<evidence type="ECO:0000250" key="1"/>
<evidence type="ECO:0000305" key="2"/>
<comment type="function">
    <text evidence="1">Reversibly catalyzes the transfer of the carbamoyl group from carbamoyl phosphate (CP) to the N(epsilon) atom of ornithine (ORN) to produce L-citrulline.</text>
</comment>
<comment type="catalytic activity">
    <reaction>
        <text>carbamoyl phosphate + L-ornithine = L-citrulline + phosphate + H(+)</text>
        <dbReference type="Rhea" id="RHEA:19513"/>
        <dbReference type="ChEBI" id="CHEBI:15378"/>
        <dbReference type="ChEBI" id="CHEBI:43474"/>
        <dbReference type="ChEBI" id="CHEBI:46911"/>
        <dbReference type="ChEBI" id="CHEBI:57743"/>
        <dbReference type="ChEBI" id="CHEBI:58228"/>
        <dbReference type="EC" id="2.1.3.3"/>
    </reaction>
</comment>
<comment type="pathway">
    <text>Amino-acid biosynthesis; L-arginine biosynthesis; L-arginine from L-ornithine and carbamoyl phosphate: step 1/3.</text>
</comment>
<comment type="subcellular location">
    <subcellularLocation>
        <location evidence="1">Cytoplasm</location>
    </subcellularLocation>
</comment>
<comment type="similarity">
    <text evidence="2">Belongs to the aspartate/ornithine carbamoyltransferase superfamily. OTCase family.</text>
</comment>
<sequence>KTSTRTRCAFEVAARDQGAGVTYLEPSASQIRHKESIKDTARVLGRMYDGIEYRGFGQDVVEELAKYAGVPVFNGLTNEFHPTQMLADALTMREHSGKPLNQTAFAYVGDARYNMANSLLVLGAKLGMDVRIGAPKTLWPSENIVARARAVAEETGGKILLTENAEEAVKGVDFIHTDVWVSMGEPKEAWQERIDLLKDYRVTPELMAVSGNPQVKFMHCLPAFHNRETKVGEWIYETFGLNGVEVTEEVFESSASIVFDQA</sequence>